<comment type="function">
    <text evidence="1">Required for assembly of cytochrome c oxidase (complex IV).</text>
</comment>
<comment type="subunit">
    <text evidence="1">Component of 250-400 kDa complexes called cytochrome oxidase assembly intermediates or COA complexes.</text>
</comment>
<comment type="subcellular location">
    <subcellularLocation>
        <location>Mitochondrion inner membrane</location>
        <topology>Single-pass membrane protein</topology>
    </subcellularLocation>
</comment>
<comment type="similarity">
    <text evidence="3">Belongs to the COA3 family.</text>
</comment>
<organism>
    <name type="scientific">Lachancea thermotolerans (strain ATCC 56472 / CBS 6340 / NRRL Y-8284)</name>
    <name type="common">Yeast</name>
    <name type="synonym">Kluyveromyces thermotolerans</name>
    <dbReference type="NCBI Taxonomy" id="559295"/>
    <lineage>
        <taxon>Eukaryota</taxon>
        <taxon>Fungi</taxon>
        <taxon>Dikarya</taxon>
        <taxon>Ascomycota</taxon>
        <taxon>Saccharomycotina</taxon>
        <taxon>Saccharomycetes</taxon>
        <taxon>Saccharomycetales</taxon>
        <taxon>Saccharomycetaceae</taxon>
        <taxon>Lachancea</taxon>
    </lineage>
</organism>
<accession>C5E368</accession>
<feature type="chain" id="PRO_0000405442" description="Cytochrome c oxidase assembly factor 3, mitochondrial">
    <location>
        <begin position="1"/>
        <end position="91"/>
    </location>
</feature>
<feature type="topological domain" description="Mitochondrial matrix" evidence="1">
    <location>
        <begin position="1"/>
        <end position="30"/>
    </location>
</feature>
<feature type="transmembrane region" description="Helical" evidence="2">
    <location>
        <begin position="31"/>
        <end position="53"/>
    </location>
</feature>
<feature type="topological domain" description="Mitochondrial intermembrane" evidence="1">
    <location>
        <begin position="54"/>
        <end position="91"/>
    </location>
</feature>
<gene>
    <name type="primary">COA3</name>
    <name type="ordered locus">KLTH0H10802g</name>
</gene>
<name>COA3_LACTC</name>
<keyword id="KW-0472">Membrane</keyword>
<keyword id="KW-0496">Mitochondrion</keyword>
<keyword id="KW-0999">Mitochondrion inner membrane</keyword>
<keyword id="KW-1185">Reference proteome</keyword>
<keyword id="KW-0812">Transmembrane</keyword>
<keyword id="KW-1133">Transmembrane helix</keyword>
<proteinExistence type="inferred from homology"/>
<protein>
    <recommendedName>
        <fullName>Cytochrome c oxidase assembly factor 3, mitochondrial</fullName>
    </recommendedName>
</protein>
<reference key="1">
    <citation type="journal article" date="2009" name="Genome Res.">
        <title>Comparative genomics of protoploid Saccharomycetaceae.</title>
        <authorList>
            <consortium name="The Genolevures Consortium"/>
            <person name="Souciet J.-L."/>
            <person name="Dujon B."/>
            <person name="Gaillardin C."/>
            <person name="Johnston M."/>
            <person name="Baret P.V."/>
            <person name="Cliften P."/>
            <person name="Sherman D.J."/>
            <person name="Weissenbach J."/>
            <person name="Westhof E."/>
            <person name="Wincker P."/>
            <person name="Jubin C."/>
            <person name="Poulain J."/>
            <person name="Barbe V."/>
            <person name="Segurens B."/>
            <person name="Artiguenave F."/>
            <person name="Anthouard V."/>
            <person name="Vacherie B."/>
            <person name="Val M.-E."/>
            <person name="Fulton R.S."/>
            <person name="Minx P."/>
            <person name="Wilson R."/>
            <person name="Durrens P."/>
            <person name="Jean G."/>
            <person name="Marck C."/>
            <person name="Martin T."/>
            <person name="Nikolski M."/>
            <person name="Rolland T."/>
            <person name="Seret M.-L."/>
            <person name="Casaregola S."/>
            <person name="Despons L."/>
            <person name="Fairhead C."/>
            <person name="Fischer G."/>
            <person name="Lafontaine I."/>
            <person name="Leh V."/>
            <person name="Lemaire M."/>
            <person name="de Montigny J."/>
            <person name="Neuveglise C."/>
            <person name="Thierry A."/>
            <person name="Blanc-Lenfle I."/>
            <person name="Bleykasten C."/>
            <person name="Diffels J."/>
            <person name="Fritsch E."/>
            <person name="Frangeul L."/>
            <person name="Goeffon A."/>
            <person name="Jauniaux N."/>
            <person name="Kachouri-Lafond R."/>
            <person name="Payen C."/>
            <person name="Potier S."/>
            <person name="Pribylova L."/>
            <person name="Ozanne C."/>
            <person name="Richard G.-F."/>
            <person name="Sacerdot C."/>
            <person name="Straub M.-L."/>
            <person name="Talla E."/>
        </authorList>
    </citation>
    <scope>NUCLEOTIDE SEQUENCE [LARGE SCALE GENOMIC DNA]</scope>
    <source>
        <strain>ATCC 56472 / CBS 6340 / NRRL Y-8284</strain>
    </source>
</reference>
<evidence type="ECO:0000250" key="1"/>
<evidence type="ECO:0000255" key="2"/>
<evidence type="ECO:0000305" key="3"/>
<sequence>MAFEPSRYQDPRTWKMTPAMIRARRPFFKKNLLGLGILVSVTGGIYVYTHRFLNRDNDFADVPIPPIDPKELEQLKKEYEQHKRDVAARDE</sequence>
<dbReference type="EMBL" id="CU928180">
    <property type="protein sequence ID" value="CAR30479.1"/>
    <property type="molecule type" value="Genomic_DNA"/>
</dbReference>
<dbReference type="RefSeq" id="XP_002556341.1">
    <property type="nucleotide sequence ID" value="XM_002556295.1"/>
</dbReference>
<dbReference type="SMR" id="C5E368"/>
<dbReference type="FunCoup" id="C5E368">
    <property type="interactions" value="38"/>
</dbReference>
<dbReference type="STRING" id="559295.C5E368"/>
<dbReference type="GeneID" id="8294672"/>
<dbReference type="KEGG" id="lth:KLTH0H10802g"/>
<dbReference type="eggNOG" id="ENOG502S440">
    <property type="taxonomic scope" value="Eukaryota"/>
</dbReference>
<dbReference type="HOGENOM" id="CLU_153999_0_0_1"/>
<dbReference type="InParanoid" id="C5E368"/>
<dbReference type="OMA" id="WKMTPAM"/>
<dbReference type="OrthoDB" id="10018333at2759"/>
<dbReference type="Proteomes" id="UP000002036">
    <property type="component" value="Chromosome H"/>
</dbReference>
<dbReference type="GO" id="GO:0005743">
    <property type="term" value="C:mitochondrial inner membrane"/>
    <property type="evidence" value="ECO:0007669"/>
    <property type="project" value="UniProtKB-SubCell"/>
</dbReference>
<dbReference type="GO" id="GO:0033617">
    <property type="term" value="P:mitochondrial cytochrome c oxidase assembly"/>
    <property type="evidence" value="ECO:0007669"/>
    <property type="project" value="InterPro"/>
</dbReference>
<dbReference type="InterPro" id="IPR041752">
    <property type="entry name" value="Coa3"/>
</dbReference>
<dbReference type="PANTHER" id="PTHR15642:SF3">
    <property type="entry name" value="CYTOCHROME C OXIDASE ASSEMBLY FACTOR 3 HOMOLOG, MITOCHONDRIAL"/>
    <property type="match status" value="1"/>
</dbReference>
<dbReference type="PANTHER" id="PTHR15642">
    <property type="entry name" value="CYTOCHROME C OXIDASE ASSEMBLY FACTOR 3, MITOCHONDRIAL"/>
    <property type="match status" value="1"/>
</dbReference>